<comment type="function">
    <text evidence="1">One of the components of the core complex of photosystem II (PSII). It binds chlorophyll and helps catalyze the primary light-induced photochemical processes of PSII. PSII is a light-driven water:plastoquinone oxidoreductase, using light energy to abstract electrons from H(2)O, generating O(2) and a proton gradient subsequently used for ATP formation.</text>
</comment>
<comment type="cofactor">
    <text evidence="1">Binds multiple chlorophylls. PSII binds additional chlorophylls, carotenoids and specific lipids.</text>
</comment>
<comment type="subunit">
    <text evidence="1">PSII is composed of 1 copy each of membrane proteins PsbA, PsbB, PsbC, PsbD, PsbE, PsbF, PsbH, PsbI, PsbJ, PsbK, PsbL, PsbM, PsbT, PsbX, PsbY, PsbZ, Psb30/Ycf12, at least 3 peripheral proteins of the oxygen-evolving complex and a large number of cofactors. It forms dimeric complexes.</text>
</comment>
<comment type="subcellular location">
    <subcellularLocation>
        <location evidence="1">Plastid</location>
        <location evidence="1">Chloroplast thylakoid membrane</location>
        <topology evidence="1">Multi-pass membrane protein</topology>
    </subcellularLocation>
</comment>
<comment type="similarity">
    <text evidence="1">Belongs to the PsbB/PsbC family. PsbB subfamily.</text>
</comment>
<proteinExistence type="inferred from homology"/>
<organism>
    <name type="scientific">Secale cereale</name>
    <name type="common">Rye</name>
    <dbReference type="NCBI Taxonomy" id="4550"/>
    <lineage>
        <taxon>Eukaryota</taxon>
        <taxon>Viridiplantae</taxon>
        <taxon>Streptophyta</taxon>
        <taxon>Embryophyta</taxon>
        <taxon>Tracheophyta</taxon>
        <taxon>Spermatophyta</taxon>
        <taxon>Magnoliopsida</taxon>
        <taxon>Liliopsida</taxon>
        <taxon>Poales</taxon>
        <taxon>Poaceae</taxon>
        <taxon>BOP clade</taxon>
        <taxon>Pooideae</taxon>
        <taxon>Triticodae</taxon>
        <taxon>Triticeae</taxon>
        <taxon>Hordeinae</taxon>
        <taxon>Secale</taxon>
    </lineage>
</organism>
<reference key="1">
    <citation type="journal article" date="1988" name="Nucleic Acids Res.">
        <title>Nucleotide sequence of rye chloroplast DNA fragment encoding psbB and psbH genes.</title>
        <authorList>
            <person name="Bukharov A.A."/>
            <person name="Kolosov V.L."/>
            <person name="Zolotarev A.S."/>
        </authorList>
    </citation>
    <scope>NUCLEOTIDE SEQUENCE [GENOMIC DNA]</scope>
</reference>
<reference key="2">
    <citation type="journal article" date="1989" name="Bioorg. Khim.">
        <title>Photosystem II of rye. Nucleotide sequence of psbB and psbH genes, coding 47-kDa of chlorophyll(a)-binding and 10-kDa phosphorylated subunits.</title>
        <authorList>
            <person name="Bukharov A.A."/>
            <person name="Kolosov V.L."/>
            <person name="Zolotarev A.S."/>
            <person name="Abdulaev N.G."/>
        </authorList>
    </citation>
    <scope>NUCLEOTIDE SEQUENCE [GENOMIC DNA]</scope>
</reference>
<feature type="chain" id="PRO_0000077497" description="Photosystem II CP47 reaction center protein">
    <location>
        <begin position="1"/>
        <end position="508"/>
    </location>
</feature>
<feature type="transmembrane region" description="Helical" evidence="1">
    <location>
        <begin position="21"/>
        <end position="36"/>
    </location>
</feature>
<feature type="transmembrane region" description="Helical" evidence="1">
    <location>
        <begin position="101"/>
        <end position="115"/>
    </location>
</feature>
<feature type="transmembrane region" description="Helical" evidence="1">
    <location>
        <begin position="140"/>
        <end position="156"/>
    </location>
</feature>
<feature type="transmembrane region" description="Helical" evidence="1">
    <location>
        <begin position="203"/>
        <end position="218"/>
    </location>
</feature>
<feature type="transmembrane region" description="Helical" evidence="1">
    <location>
        <begin position="237"/>
        <end position="252"/>
    </location>
</feature>
<feature type="transmembrane region" description="Helical" evidence="1">
    <location>
        <begin position="457"/>
        <end position="472"/>
    </location>
</feature>
<gene>
    <name evidence="1" type="primary">psbB</name>
</gene>
<keyword id="KW-0148">Chlorophyll</keyword>
<keyword id="KW-0150">Chloroplast</keyword>
<keyword id="KW-0157">Chromophore</keyword>
<keyword id="KW-0472">Membrane</keyword>
<keyword id="KW-0602">Photosynthesis</keyword>
<keyword id="KW-0604">Photosystem II</keyword>
<keyword id="KW-0934">Plastid</keyword>
<keyword id="KW-0793">Thylakoid</keyword>
<keyword id="KW-0812">Transmembrane</keyword>
<keyword id="KW-1133">Transmembrane helix</keyword>
<dbReference type="EMBL" id="X07672">
    <property type="protein sequence ID" value="CAA30519.1"/>
    <property type="molecule type" value="Genomic_DNA"/>
</dbReference>
<dbReference type="PIR" id="S01385">
    <property type="entry name" value="S01385"/>
</dbReference>
<dbReference type="RefSeq" id="YP_008239195.1">
    <property type="nucleotide sequence ID" value="NC_021761.1"/>
</dbReference>
<dbReference type="SMR" id="P09447"/>
<dbReference type="GeneID" id="16792708"/>
<dbReference type="GO" id="GO:0009535">
    <property type="term" value="C:chloroplast thylakoid membrane"/>
    <property type="evidence" value="ECO:0007669"/>
    <property type="project" value="UniProtKB-SubCell"/>
</dbReference>
<dbReference type="GO" id="GO:0009523">
    <property type="term" value="C:photosystem II"/>
    <property type="evidence" value="ECO:0007669"/>
    <property type="project" value="UniProtKB-KW"/>
</dbReference>
<dbReference type="GO" id="GO:0016168">
    <property type="term" value="F:chlorophyll binding"/>
    <property type="evidence" value="ECO:0007669"/>
    <property type="project" value="UniProtKB-UniRule"/>
</dbReference>
<dbReference type="GO" id="GO:0045156">
    <property type="term" value="F:electron transporter, transferring electrons within the cyclic electron transport pathway of photosynthesis activity"/>
    <property type="evidence" value="ECO:0007669"/>
    <property type="project" value="InterPro"/>
</dbReference>
<dbReference type="GO" id="GO:0009772">
    <property type="term" value="P:photosynthetic electron transport in photosystem II"/>
    <property type="evidence" value="ECO:0007669"/>
    <property type="project" value="InterPro"/>
</dbReference>
<dbReference type="FunFam" id="3.10.680.10:FF:000001">
    <property type="entry name" value="Photosystem II CP47 reaction center protein"/>
    <property type="match status" value="1"/>
</dbReference>
<dbReference type="Gene3D" id="3.10.680.10">
    <property type="entry name" value="Photosystem II CP47 reaction center protein"/>
    <property type="match status" value="1"/>
</dbReference>
<dbReference type="HAMAP" id="MF_01495">
    <property type="entry name" value="PSII_PsbB_CP47"/>
    <property type="match status" value="1"/>
</dbReference>
<dbReference type="InterPro" id="IPR000932">
    <property type="entry name" value="PS_antenna-like"/>
</dbReference>
<dbReference type="InterPro" id="IPR036001">
    <property type="entry name" value="PS_II_antenna-like_sf"/>
</dbReference>
<dbReference type="InterPro" id="IPR017486">
    <property type="entry name" value="PSII_PsbB"/>
</dbReference>
<dbReference type="NCBIfam" id="TIGR03039">
    <property type="entry name" value="PS_II_CP47"/>
    <property type="match status" value="1"/>
</dbReference>
<dbReference type="PANTHER" id="PTHR33180">
    <property type="entry name" value="PHOTOSYSTEM II CP43 REACTION CENTER PROTEIN"/>
    <property type="match status" value="1"/>
</dbReference>
<dbReference type="PANTHER" id="PTHR33180:SF37">
    <property type="entry name" value="PHOTOSYSTEM II CP43 REACTION CENTER PROTEIN"/>
    <property type="match status" value="1"/>
</dbReference>
<dbReference type="Pfam" id="PF00421">
    <property type="entry name" value="PSII"/>
    <property type="match status" value="1"/>
</dbReference>
<dbReference type="SUPFAM" id="SSF161077">
    <property type="entry name" value="Photosystem II antenna protein-like"/>
    <property type="match status" value="1"/>
</dbReference>
<evidence type="ECO:0000255" key="1">
    <source>
        <dbReference type="HAMAP-Rule" id="MF_01495"/>
    </source>
</evidence>
<name>PSBB_SECCE</name>
<accession>P09447</accession>
<sequence length="508" mass="56120">MGLPWYRVHTVVLNDPGRLLAVHIMHTALVSGWAGSMALYELAVFDPSDPVLDPMWRQGMFVIPFMTRLGITDSWGGWSISGGTVTNPGIWSYEGVAGTHIVFSGLCFLAAIWHWVYWDLEIFSDERTGKPSLDLPKIFGIHLFLAGVACFGFGAFHVTGLYGPGIWVSDPYGLTGKVQAVNPAWGAEGFDPFVPGGIASHHIAAGTLGILAGLFHLSVRPPQRLYKGLRMGNIETVLSSSIAAVFFAAFVVAGTMWYGSATTPIELFGPTRYQWDQGYFQQEIYRRVSNGLAENLSLSEAWSKIPEKLAFYDYIGNNPAKGGLFRAGSMDNGDGIAVGWLGHPVFRDKEGRELFVRRMPTFFETFPVVLVDEEGIVRADVPFRRAESKYSVEQVGVTVEFYGGELNGVSYSDPATVKKYARRSQLGEIFELDRATLKSDGVFRSSPRGWFTFGHATFALLFFFGHIWHGARTLFRDVFAGIDPDLDAQVEFGTFQKVGDPTTRKQAV</sequence>
<geneLocation type="chloroplast"/>
<protein>
    <recommendedName>
        <fullName evidence="1">Photosystem II CP47 reaction center protein</fullName>
    </recommendedName>
    <alternativeName>
        <fullName evidence="1">PSII 47 kDa protein</fullName>
    </alternativeName>
    <alternativeName>
        <fullName evidence="1">Protein CP-47</fullName>
    </alternativeName>
</protein>